<keyword id="KW-0217">Developmental protein</keyword>
<keyword id="KW-0221">Differentiation</keyword>
<keyword id="KW-0597">Phosphoprotein</keyword>
<keyword id="KW-1185">Reference proteome</keyword>
<keyword id="KW-0964">Secreted</keyword>
<keyword id="KW-0744">Spermatogenesis</keyword>
<dbReference type="EMBL" id="AL645809">
    <property type="status" value="NOT_ANNOTATED_CDS"/>
    <property type="molecule type" value="Genomic_DNA"/>
</dbReference>
<dbReference type="EMBL" id="AL645965">
    <property type="status" value="NOT_ANNOTATED_CDS"/>
    <property type="molecule type" value="Genomic_DNA"/>
</dbReference>
<dbReference type="EMBL" id="BC050788">
    <property type="protein sequence ID" value="AAH50788.1"/>
    <property type="molecule type" value="mRNA"/>
</dbReference>
<dbReference type="CCDS" id="CCDS25256.1"/>
<dbReference type="RefSeq" id="NP_659076.2">
    <property type="nucleotide sequence ID" value="NM_144827.4"/>
</dbReference>
<dbReference type="SMR" id="Q80YT5"/>
<dbReference type="BioGRID" id="229844">
    <property type="interactions" value="1"/>
</dbReference>
<dbReference type="FunCoup" id="Q80YT5">
    <property type="interactions" value="1487"/>
</dbReference>
<dbReference type="IntAct" id="Q80YT5">
    <property type="interactions" value="3"/>
</dbReference>
<dbReference type="MINT" id="Q80YT5"/>
<dbReference type="STRING" id="10090.ENSMUSP00000042572"/>
<dbReference type="iPTMnet" id="Q80YT5"/>
<dbReference type="PhosphoSitePlus" id="Q80YT5"/>
<dbReference type="SwissPalm" id="Q80YT5"/>
<dbReference type="PaxDb" id="10090-ENSMUSP00000042572"/>
<dbReference type="PeptideAtlas" id="Q80YT5"/>
<dbReference type="ProteomicsDB" id="257387"/>
<dbReference type="Antibodypedia" id="18108">
    <property type="antibodies" value="56 antibodies from 18 providers"/>
</dbReference>
<dbReference type="DNASU" id="217116"/>
<dbReference type="Ensembl" id="ENSMUST00000041705.8">
    <property type="protein sequence ID" value="ENSMUSP00000042572.8"/>
    <property type="gene ID" value="ENSMUSG00000020867.14"/>
</dbReference>
<dbReference type="GeneID" id="217116"/>
<dbReference type="KEGG" id="mmu:217116"/>
<dbReference type="UCSC" id="uc007kyt.1">
    <property type="organism name" value="mouse"/>
</dbReference>
<dbReference type="AGR" id="MGI:2183449"/>
<dbReference type="CTD" id="64847"/>
<dbReference type="MGI" id="MGI:2183449">
    <property type="gene designation" value="Spata20"/>
</dbReference>
<dbReference type="VEuPathDB" id="HostDB:ENSMUSG00000020867"/>
<dbReference type="eggNOG" id="KOG2244">
    <property type="taxonomic scope" value="Eukaryota"/>
</dbReference>
<dbReference type="GeneTree" id="ENSGT00390000004836"/>
<dbReference type="HOGENOM" id="CLU_014051_4_1_1"/>
<dbReference type="InParanoid" id="Q80YT5"/>
<dbReference type="OMA" id="PFYFGTY"/>
<dbReference type="OrthoDB" id="1923667at2759"/>
<dbReference type="PhylomeDB" id="Q80YT5"/>
<dbReference type="TreeFam" id="TF105663"/>
<dbReference type="BioGRID-ORCS" id="217116">
    <property type="hits" value="1 hit in 77 CRISPR screens"/>
</dbReference>
<dbReference type="ChiTaRS" id="Spata20">
    <property type="organism name" value="mouse"/>
</dbReference>
<dbReference type="PRO" id="PR:Q80YT5"/>
<dbReference type="Proteomes" id="UP000000589">
    <property type="component" value="Chromosome 11"/>
</dbReference>
<dbReference type="RNAct" id="Q80YT5">
    <property type="molecule type" value="protein"/>
</dbReference>
<dbReference type="Bgee" id="ENSMUSG00000020867">
    <property type="expression patterns" value="Expressed in spermatid and 23 other cell types or tissues"/>
</dbReference>
<dbReference type="GO" id="GO:0005576">
    <property type="term" value="C:extracellular region"/>
    <property type="evidence" value="ECO:0007669"/>
    <property type="project" value="UniProtKB-SubCell"/>
</dbReference>
<dbReference type="GO" id="GO:0005975">
    <property type="term" value="P:carbohydrate metabolic process"/>
    <property type="evidence" value="ECO:0007669"/>
    <property type="project" value="InterPro"/>
</dbReference>
<dbReference type="GO" id="GO:0030154">
    <property type="term" value="P:cell differentiation"/>
    <property type="evidence" value="ECO:0007669"/>
    <property type="project" value="UniProtKB-KW"/>
</dbReference>
<dbReference type="GO" id="GO:0007283">
    <property type="term" value="P:spermatogenesis"/>
    <property type="evidence" value="ECO:0007669"/>
    <property type="project" value="UniProtKB-KW"/>
</dbReference>
<dbReference type="CDD" id="cd02955">
    <property type="entry name" value="SSP411"/>
    <property type="match status" value="1"/>
</dbReference>
<dbReference type="Gene3D" id="1.50.10.10">
    <property type="match status" value="1"/>
</dbReference>
<dbReference type="Gene3D" id="3.40.30.10">
    <property type="entry name" value="Glutaredoxin"/>
    <property type="match status" value="1"/>
</dbReference>
<dbReference type="InterPro" id="IPR008928">
    <property type="entry name" value="6-hairpin_glycosidase_sf"/>
</dbReference>
<dbReference type="InterPro" id="IPR012341">
    <property type="entry name" value="6hp_glycosidase-like_sf"/>
</dbReference>
<dbReference type="InterPro" id="IPR024705">
    <property type="entry name" value="Ssp411"/>
</dbReference>
<dbReference type="InterPro" id="IPR004879">
    <property type="entry name" value="Ssp411-like_TRX"/>
</dbReference>
<dbReference type="InterPro" id="IPR036249">
    <property type="entry name" value="Thioredoxin-like_sf"/>
</dbReference>
<dbReference type="PANTHER" id="PTHR42899">
    <property type="entry name" value="SPERMATOGENESIS-ASSOCIATED PROTEIN 20"/>
    <property type="match status" value="1"/>
</dbReference>
<dbReference type="PANTHER" id="PTHR42899:SF1">
    <property type="entry name" value="SPERMATOGENESIS-ASSOCIATED PROTEIN 20"/>
    <property type="match status" value="1"/>
</dbReference>
<dbReference type="Pfam" id="PF03190">
    <property type="entry name" value="Thioredox_DsbH"/>
    <property type="match status" value="1"/>
</dbReference>
<dbReference type="PIRSF" id="PIRSF006402">
    <property type="entry name" value="UCP006402_thioredoxin"/>
    <property type="match status" value="1"/>
</dbReference>
<dbReference type="SUPFAM" id="SSF48208">
    <property type="entry name" value="Six-hairpin glycosidases"/>
    <property type="match status" value="1"/>
</dbReference>
<dbReference type="SUPFAM" id="SSF52833">
    <property type="entry name" value="Thioredoxin-like"/>
    <property type="match status" value="1"/>
</dbReference>
<protein>
    <recommendedName>
        <fullName>Spermatogenesis-associated protein 20</fullName>
    </recommendedName>
    <alternativeName>
        <fullName>Sperm-specific protein 411</fullName>
        <shortName>Ssp411</shortName>
    </alternativeName>
    <alternativeName>
        <fullName>Transcript increased in spermiogenesis 78 protein</fullName>
    </alternativeName>
</protein>
<name>SPT20_MOUSE</name>
<accession>Q80YT5</accession>
<feature type="chain" id="PRO_0000278451" description="Spermatogenesis-associated protein 20">
    <location>
        <begin position="1"/>
        <end position="790"/>
    </location>
</feature>
<feature type="region of interest" description="Disordered" evidence="3">
    <location>
        <begin position="1"/>
        <end position="67"/>
    </location>
</feature>
<feature type="compositionally biased region" description="Basic residues" evidence="3">
    <location>
        <begin position="1"/>
        <end position="19"/>
    </location>
</feature>
<feature type="compositionally biased region" description="Basic and acidic residues" evidence="3">
    <location>
        <begin position="23"/>
        <end position="36"/>
    </location>
</feature>
<feature type="modified residue" description="Phosphoserine" evidence="2">
    <location>
        <position position="5"/>
    </location>
</feature>
<feature type="modified residue" description="Phosphoserine" evidence="2">
    <location>
        <position position="653"/>
    </location>
</feature>
<comment type="function">
    <text evidence="1">May play a role in fertility regulation.</text>
</comment>
<comment type="subcellular location">
    <subcellularLocation>
        <location evidence="5">Secreted</location>
    </subcellularLocation>
</comment>
<comment type="developmental stage">
    <text evidence="4">Detected in 28- and 75-day-old mouse testes. No expression detected at 21 days.</text>
</comment>
<gene>
    <name type="primary">Spata20</name>
    <name type="synonym">Tisp78</name>
</gene>
<organism>
    <name type="scientific">Mus musculus</name>
    <name type="common">Mouse</name>
    <dbReference type="NCBI Taxonomy" id="10090"/>
    <lineage>
        <taxon>Eukaryota</taxon>
        <taxon>Metazoa</taxon>
        <taxon>Chordata</taxon>
        <taxon>Craniata</taxon>
        <taxon>Vertebrata</taxon>
        <taxon>Euteleostomi</taxon>
        <taxon>Mammalia</taxon>
        <taxon>Eutheria</taxon>
        <taxon>Euarchontoglires</taxon>
        <taxon>Glires</taxon>
        <taxon>Rodentia</taxon>
        <taxon>Myomorpha</taxon>
        <taxon>Muroidea</taxon>
        <taxon>Muridae</taxon>
        <taxon>Murinae</taxon>
        <taxon>Mus</taxon>
        <taxon>Mus</taxon>
    </lineage>
</organism>
<evidence type="ECO:0000250" key="1"/>
<evidence type="ECO:0000250" key="2">
    <source>
        <dbReference type="UniProtKB" id="Q6T393"/>
    </source>
</evidence>
<evidence type="ECO:0000256" key="3">
    <source>
        <dbReference type="SAM" id="MobiDB-lite"/>
    </source>
</evidence>
<evidence type="ECO:0000269" key="4">
    <source>
    </source>
</evidence>
<evidence type="ECO:0000305" key="5"/>
<proteinExistence type="evidence at protein level"/>
<sequence>MSHHSSPPPKHKGEHKGHGLPRGSERGSSSRDKDRSATTVSSSAPMPAGGKSSRTNCPPPAPPKTVNRLINEKSPYLLQHAYNPVDWYPWGQEAFDKAKKENKPIFLSVGYSTCHWCHMMEEESFQNEEIGRLLNENFICVMVDREERPDVDKVYMTFVQATSSGGGWPMNVWLTPGLQPFVGGTYFPPEDGLTRVGFRTVLMRICDQWKLNKNTLLENSQRVTTALLARSEISVGDRQIPASAATMNSRCFQQLDEGYDEEYGGFAEAPKFPTPVILNFLFSYWLSHRLTQDGSRAQQMALHTLKMMANGGIQDHVGQGFHRYSTDRQWHIPHFEKMLYDQAQLSVVYTQAFQISGDEFYADVAKGILQYVTRTLSHRSGGFYSAEDADSPPERGMKPQEGAYYVWTVKEVQQLLPEPVVGASEPLTSGQLLMKHYGLSEVGNINSSQDPNGELHGQNVLMVRYSLELTAARYGLEVEAVRALLNTGLEKLFQARKHRPKAHLDNKMLAAWNGLMVSGFAVTGAALGMEKLVAQATSGAKFLKRHMFDVSSGRLKRTCYAGTGGTVEQSNPPCWGFLEDYAFVVRGLLDLYEASQESSWLEWALRLQDTQDKLFWDPRGGGYFCSEAELGADLPLRLKDDQDGAEPSANSVSAHNLLRLHSFTGHKDWMDKCVCLLTAFSERMRRVPVALPEMVRTLSAQQQTLKQIVICGDPQAKDTKALLQCVHSIYVPNKVLILADGDPSSFLSRQLPFLSSLRRVEDRATVYIFENQACSMPITDPCELRKLLHQ</sequence>
<reference key="1">
    <citation type="journal article" date="2009" name="PLoS Biol.">
        <title>Lineage-specific biology revealed by a finished genome assembly of the mouse.</title>
        <authorList>
            <person name="Church D.M."/>
            <person name="Goodstadt L."/>
            <person name="Hillier L.W."/>
            <person name="Zody M.C."/>
            <person name="Goldstein S."/>
            <person name="She X."/>
            <person name="Bult C.J."/>
            <person name="Agarwala R."/>
            <person name="Cherry J.L."/>
            <person name="DiCuccio M."/>
            <person name="Hlavina W."/>
            <person name="Kapustin Y."/>
            <person name="Meric P."/>
            <person name="Maglott D."/>
            <person name="Birtle Z."/>
            <person name="Marques A.C."/>
            <person name="Graves T."/>
            <person name="Zhou S."/>
            <person name="Teague B."/>
            <person name="Potamousis K."/>
            <person name="Churas C."/>
            <person name="Place M."/>
            <person name="Herschleb J."/>
            <person name="Runnheim R."/>
            <person name="Forrest D."/>
            <person name="Amos-Landgraf J."/>
            <person name="Schwartz D.C."/>
            <person name="Cheng Z."/>
            <person name="Lindblad-Toh K."/>
            <person name="Eichler E.E."/>
            <person name="Ponting C.P."/>
        </authorList>
    </citation>
    <scope>NUCLEOTIDE SEQUENCE [LARGE SCALE GENOMIC DNA]</scope>
    <source>
        <strain>C57BL/6J</strain>
    </source>
</reference>
<reference key="2">
    <citation type="journal article" date="2004" name="Genome Res.">
        <title>The status, quality, and expansion of the NIH full-length cDNA project: the Mammalian Gene Collection (MGC).</title>
        <authorList>
            <consortium name="The MGC Project Team"/>
        </authorList>
    </citation>
    <scope>NUCLEOTIDE SEQUENCE [LARGE SCALE MRNA]</scope>
    <source>
        <tissue>Testis</tissue>
    </source>
</reference>
<reference key="3">
    <citation type="journal article" date="2004" name="J. Androl.">
        <title>Cloning and characterization of rat spermatid protein SSP411: a thioredoxin-like protein.</title>
        <authorList>
            <person name="Shi H.-J."/>
            <person name="Wu A.Z."/>
            <person name="Santos M."/>
            <person name="Feng Z.-M."/>
            <person name="Huang L."/>
            <person name="Chen Y.-M."/>
            <person name="Zhu K."/>
            <person name="Chen C.-L.C."/>
        </authorList>
    </citation>
    <scope>DEVELOPMENTAL STAGE</scope>
</reference>
<reference key="4">
    <citation type="journal article" date="2010" name="Cell">
        <title>A tissue-specific atlas of mouse protein phosphorylation and expression.</title>
        <authorList>
            <person name="Huttlin E.L."/>
            <person name="Jedrychowski M.P."/>
            <person name="Elias J.E."/>
            <person name="Goswami T."/>
            <person name="Rad R."/>
            <person name="Beausoleil S.A."/>
            <person name="Villen J."/>
            <person name="Haas W."/>
            <person name="Sowa M.E."/>
            <person name="Gygi S.P."/>
        </authorList>
    </citation>
    <scope>IDENTIFICATION BY MASS SPECTROMETRY [LARGE SCALE ANALYSIS]</scope>
    <source>
        <tissue>Testis</tissue>
    </source>
</reference>